<name>DAPB_CAUVC</name>
<proteinExistence type="inferred from homology"/>
<gene>
    <name evidence="1" type="primary">dapB</name>
    <name type="ordered locus">CC_3550</name>
</gene>
<organism>
    <name type="scientific">Caulobacter vibrioides (strain ATCC 19089 / CIP 103742 / CB 15)</name>
    <name type="common">Caulobacter crescentus</name>
    <dbReference type="NCBI Taxonomy" id="190650"/>
    <lineage>
        <taxon>Bacteria</taxon>
        <taxon>Pseudomonadati</taxon>
        <taxon>Pseudomonadota</taxon>
        <taxon>Alphaproteobacteria</taxon>
        <taxon>Caulobacterales</taxon>
        <taxon>Caulobacteraceae</taxon>
        <taxon>Caulobacter</taxon>
    </lineage>
</organism>
<reference key="1">
    <citation type="journal article" date="2001" name="Proc. Natl. Acad. Sci. U.S.A.">
        <title>Complete genome sequence of Caulobacter crescentus.</title>
        <authorList>
            <person name="Nierman W.C."/>
            <person name="Feldblyum T.V."/>
            <person name="Laub M.T."/>
            <person name="Paulsen I.T."/>
            <person name="Nelson K.E."/>
            <person name="Eisen J.A."/>
            <person name="Heidelberg J.F."/>
            <person name="Alley M.R.K."/>
            <person name="Ohta N."/>
            <person name="Maddock J.R."/>
            <person name="Potocka I."/>
            <person name="Nelson W.C."/>
            <person name="Newton A."/>
            <person name="Stephens C."/>
            <person name="Phadke N.D."/>
            <person name="Ely B."/>
            <person name="DeBoy R.T."/>
            <person name="Dodson R.J."/>
            <person name="Durkin A.S."/>
            <person name="Gwinn M.L."/>
            <person name="Haft D.H."/>
            <person name="Kolonay J.F."/>
            <person name="Smit J."/>
            <person name="Craven M.B."/>
            <person name="Khouri H.M."/>
            <person name="Shetty J."/>
            <person name="Berry K.J."/>
            <person name="Utterback T.R."/>
            <person name="Tran K."/>
            <person name="Wolf A.M."/>
            <person name="Vamathevan J.J."/>
            <person name="Ermolaeva M.D."/>
            <person name="White O."/>
            <person name="Salzberg S.L."/>
            <person name="Venter J.C."/>
            <person name="Shapiro L."/>
            <person name="Fraser C.M."/>
        </authorList>
    </citation>
    <scope>NUCLEOTIDE SEQUENCE [LARGE SCALE GENOMIC DNA]</scope>
    <source>
        <strain>ATCC 19089 / CIP 103742 / CB 15</strain>
    </source>
</reference>
<sequence length="257" mass="26425">MSQPVKIAIAGANGRMGRAVAQALEGRSDAVVAARFERPGDAGEGLVARETALAAAEAVIDFTLPEASVALAEEAAANGGPALVIGSTGFSDEQLDRIDAAATKIVIVRSGNYSLGVNMLMGLVRQAAAALPAQDWDIEVFEAHHKRKIDAPSGTALMLGEAAAEGRGINLAKVSDRGRDGVTGPRKDGDIGFSVVRGGGIIGEHSVIFAGESESLTLSHSAIDRGLFARGAIAAAVWVKGKPPGLYDMQDVLGFKK</sequence>
<protein>
    <recommendedName>
        <fullName evidence="1">4-hydroxy-tetrahydrodipicolinate reductase</fullName>
        <shortName evidence="1">HTPA reductase</shortName>
        <ecNumber evidence="1">1.17.1.8</ecNumber>
    </recommendedName>
</protein>
<keyword id="KW-0028">Amino-acid biosynthesis</keyword>
<keyword id="KW-0963">Cytoplasm</keyword>
<keyword id="KW-0220">Diaminopimelate biosynthesis</keyword>
<keyword id="KW-0457">Lysine biosynthesis</keyword>
<keyword id="KW-0520">NAD</keyword>
<keyword id="KW-0521">NADP</keyword>
<keyword id="KW-0560">Oxidoreductase</keyword>
<keyword id="KW-1185">Reference proteome</keyword>
<dbReference type="EC" id="1.17.1.8" evidence="1"/>
<dbReference type="EMBL" id="AE005673">
    <property type="protein sequence ID" value="AAK25512.1"/>
    <property type="molecule type" value="Genomic_DNA"/>
</dbReference>
<dbReference type="PIR" id="D87689">
    <property type="entry name" value="D87689"/>
</dbReference>
<dbReference type="RefSeq" id="NP_422344.1">
    <property type="nucleotide sequence ID" value="NC_002696.2"/>
</dbReference>
<dbReference type="RefSeq" id="WP_010921379.1">
    <property type="nucleotide sequence ID" value="NC_002696.2"/>
</dbReference>
<dbReference type="SMR" id="Q9A2L1"/>
<dbReference type="STRING" id="190650.CC_3550"/>
<dbReference type="EnsemblBacteria" id="AAK25512">
    <property type="protein sequence ID" value="AAK25512"/>
    <property type="gene ID" value="CC_3550"/>
</dbReference>
<dbReference type="KEGG" id="ccr:CC_3550"/>
<dbReference type="PATRIC" id="fig|190650.5.peg.3553"/>
<dbReference type="eggNOG" id="COG0289">
    <property type="taxonomic scope" value="Bacteria"/>
</dbReference>
<dbReference type="HOGENOM" id="CLU_047479_2_1_5"/>
<dbReference type="BioCyc" id="CAULO:CC3550-MONOMER"/>
<dbReference type="UniPathway" id="UPA00034">
    <property type="reaction ID" value="UER00018"/>
</dbReference>
<dbReference type="Proteomes" id="UP000001816">
    <property type="component" value="Chromosome"/>
</dbReference>
<dbReference type="GO" id="GO:0005829">
    <property type="term" value="C:cytosol"/>
    <property type="evidence" value="ECO:0007669"/>
    <property type="project" value="TreeGrafter"/>
</dbReference>
<dbReference type="GO" id="GO:0008839">
    <property type="term" value="F:4-hydroxy-tetrahydrodipicolinate reductase"/>
    <property type="evidence" value="ECO:0007669"/>
    <property type="project" value="UniProtKB-EC"/>
</dbReference>
<dbReference type="GO" id="GO:0051287">
    <property type="term" value="F:NAD binding"/>
    <property type="evidence" value="ECO:0007669"/>
    <property type="project" value="UniProtKB-UniRule"/>
</dbReference>
<dbReference type="GO" id="GO:0050661">
    <property type="term" value="F:NADP binding"/>
    <property type="evidence" value="ECO:0007669"/>
    <property type="project" value="UniProtKB-UniRule"/>
</dbReference>
<dbReference type="GO" id="GO:0016726">
    <property type="term" value="F:oxidoreductase activity, acting on CH or CH2 groups, NAD or NADP as acceptor"/>
    <property type="evidence" value="ECO:0007669"/>
    <property type="project" value="UniProtKB-UniRule"/>
</dbReference>
<dbReference type="GO" id="GO:0019877">
    <property type="term" value="P:diaminopimelate biosynthetic process"/>
    <property type="evidence" value="ECO:0007669"/>
    <property type="project" value="UniProtKB-UniRule"/>
</dbReference>
<dbReference type="GO" id="GO:0009089">
    <property type="term" value="P:lysine biosynthetic process via diaminopimelate"/>
    <property type="evidence" value="ECO:0007669"/>
    <property type="project" value="UniProtKB-UniRule"/>
</dbReference>
<dbReference type="CDD" id="cd02274">
    <property type="entry name" value="DHDPR_N"/>
    <property type="match status" value="1"/>
</dbReference>
<dbReference type="FunFam" id="3.30.360.10:FF:000009">
    <property type="entry name" value="4-hydroxy-tetrahydrodipicolinate reductase"/>
    <property type="match status" value="1"/>
</dbReference>
<dbReference type="Gene3D" id="3.30.360.10">
    <property type="entry name" value="Dihydrodipicolinate Reductase, domain 2"/>
    <property type="match status" value="1"/>
</dbReference>
<dbReference type="Gene3D" id="3.40.50.720">
    <property type="entry name" value="NAD(P)-binding Rossmann-like Domain"/>
    <property type="match status" value="1"/>
</dbReference>
<dbReference type="HAMAP" id="MF_00102">
    <property type="entry name" value="DapB"/>
    <property type="match status" value="1"/>
</dbReference>
<dbReference type="InterPro" id="IPR022663">
    <property type="entry name" value="DapB_C"/>
</dbReference>
<dbReference type="InterPro" id="IPR000846">
    <property type="entry name" value="DapB_N"/>
</dbReference>
<dbReference type="InterPro" id="IPR022664">
    <property type="entry name" value="DapB_N_CS"/>
</dbReference>
<dbReference type="InterPro" id="IPR023940">
    <property type="entry name" value="DHDPR_bac"/>
</dbReference>
<dbReference type="InterPro" id="IPR036291">
    <property type="entry name" value="NAD(P)-bd_dom_sf"/>
</dbReference>
<dbReference type="NCBIfam" id="TIGR00036">
    <property type="entry name" value="dapB"/>
    <property type="match status" value="1"/>
</dbReference>
<dbReference type="PANTHER" id="PTHR20836:SF0">
    <property type="entry name" value="4-HYDROXY-TETRAHYDRODIPICOLINATE REDUCTASE 1, CHLOROPLASTIC-RELATED"/>
    <property type="match status" value="1"/>
</dbReference>
<dbReference type="PANTHER" id="PTHR20836">
    <property type="entry name" value="DIHYDRODIPICOLINATE REDUCTASE"/>
    <property type="match status" value="1"/>
</dbReference>
<dbReference type="Pfam" id="PF05173">
    <property type="entry name" value="DapB_C"/>
    <property type="match status" value="1"/>
</dbReference>
<dbReference type="Pfam" id="PF01113">
    <property type="entry name" value="DapB_N"/>
    <property type="match status" value="1"/>
</dbReference>
<dbReference type="PIRSF" id="PIRSF000161">
    <property type="entry name" value="DHPR"/>
    <property type="match status" value="1"/>
</dbReference>
<dbReference type="SUPFAM" id="SSF55347">
    <property type="entry name" value="Glyceraldehyde-3-phosphate dehydrogenase-like, C-terminal domain"/>
    <property type="match status" value="1"/>
</dbReference>
<dbReference type="SUPFAM" id="SSF51735">
    <property type="entry name" value="NAD(P)-binding Rossmann-fold domains"/>
    <property type="match status" value="1"/>
</dbReference>
<dbReference type="PROSITE" id="PS01298">
    <property type="entry name" value="DAPB"/>
    <property type="match status" value="1"/>
</dbReference>
<comment type="function">
    <text evidence="1">Catalyzes the conversion of 4-hydroxy-tetrahydrodipicolinate (HTPA) to tetrahydrodipicolinate.</text>
</comment>
<comment type="catalytic activity">
    <reaction evidence="1">
        <text>(S)-2,3,4,5-tetrahydrodipicolinate + NAD(+) + H2O = (2S,4S)-4-hydroxy-2,3,4,5-tetrahydrodipicolinate + NADH + H(+)</text>
        <dbReference type="Rhea" id="RHEA:35323"/>
        <dbReference type="ChEBI" id="CHEBI:15377"/>
        <dbReference type="ChEBI" id="CHEBI:15378"/>
        <dbReference type="ChEBI" id="CHEBI:16845"/>
        <dbReference type="ChEBI" id="CHEBI:57540"/>
        <dbReference type="ChEBI" id="CHEBI:57945"/>
        <dbReference type="ChEBI" id="CHEBI:67139"/>
        <dbReference type="EC" id="1.17.1.8"/>
    </reaction>
</comment>
<comment type="catalytic activity">
    <reaction evidence="1">
        <text>(S)-2,3,4,5-tetrahydrodipicolinate + NADP(+) + H2O = (2S,4S)-4-hydroxy-2,3,4,5-tetrahydrodipicolinate + NADPH + H(+)</text>
        <dbReference type="Rhea" id="RHEA:35331"/>
        <dbReference type="ChEBI" id="CHEBI:15377"/>
        <dbReference type="ChEBI" id="CHEBI:15378"/>
        <dbReference type="ChEBI" id="CHEBI:16845"/>
        <dbReference type="ChEBI" id="CHEBI:57783"/>
        <dbReference type="ChEBI" id="CHEBI:58349"/>
        <dbReference type="ChEBI" id="CHEBI:67139"/>
        <dbReference type="EC" id="1.17.1.8"/>
    </reaction>
</comment>
<comment type="pathway">
    <text evidence="1">Amino-acid biosynthesis; L-lysine biosynthesis via DAP pathway; (S)-tetrahydrodipicolinate from L-aspartate: step 4/4.</text>
</comment>
<comment type="subcellular location">
    <subcellularLocation>
        <location evidence="1">Cytoplasm</location>
    </subcellularLocation>
</comment>
<comment type="similarity">
    <text evidence="1">Belongs to the DapB family.</text>
</comment>
<comment type="caution">
    <text evidence="2">Was originally thought to be a dihydrodipicolinate reductase (DHDPR), catalyzing the conversion of dihydrodipicolinate to tetrahydrodipicolinate. However, it was shown in E.coli that the substrate of the enzymatic reaction is not dihydrodipicolinate (DHDP) but in fact (2S,4S)-4-hydroxy-2,3,4,5-tetrahydrodipicolinic acid (HTPA), the product released by the DapA-catalyzed reaction.</text>
</comment>
<feature type="chain" id="PRO_0000141425" description="4-hydroxy-tetrahydrodipicolinate reductase">
    <location>
        <begin position="1"/>
        <end position="257"/>
    </location>
</feature>
<feature type="active site" description="Proton donor/acceptor" evidence="1">
    <location>
        <position position="144"/>
    </location>
</feature>
<feature type="active site" description="Proton donor" evidence="1">
    <location>
        <position position="148"/>
    </location>
</feature>
<feature type="binding site" evidence="1">
    <location>
        <begin position="11"/>
        <end position="16"/>
    </location>
    <ligand>
        <name>NAD(+)</name>
        <dbReference type="ChEBI" id="CHEBI:57540"/>
    </ligand>
</feature>
<feature type="binding site" evidence="1">
    <location>
        <position position="37"/>
    </location>
    <ligand>
        <name>NAD(+)</name>
        <dbReference type="ChEBI" id="CHEBI:57540"/>
    </ligand>
</feature>
<feature type="binding site" evidence="1">
    <location>
        <position position="38"/>
    </location>
    <ligand>
        <name>NADP(+)</name>
        <dbReference type="ChEBI" id="CHEBI:58349"/>
    </ligand>
</feature>
<feature type="binding site" evidence="1">
    <location>
        <begin position="86"/>
        <end position="88"/>
    </location>
    <ligand>
        <name>NAD(+)</name>
        <dbReference type="ChEBI" id="CHEBI:57540"/>
    </ligand>
</feature>
<feature type="binding site" evidence="1">
    <location>
        <begin position="110"/>
        <end position="113"/>
    </location>
    <ligand>
        <name>NAD(+)</name>
        <dbReference type="ChEBI" id="CHEBI:57540"/>
    </ligand>
</feature>
<feature type="binding site" evidence="1">
    <location>
        <position position="145"/>
    </location>
    <ligand>
        <name>(S)-2,3,4,5-tetrahydrodipicolinate</name>
        <dbReference type="ChEBI" id="CHEBI:16845"/>
    </ligand>
</feature>
<feature type="binding site" evidence="1">
    <location>
        <begin position="154"/>
        <end position="155"/>
    </location>
    <ligand>
        <name>(S)-2,3,4,5-tetrahydrodipicolinate</name>
        <dbReference type="ChEBI" id="CHEBI:16845"/>
    </ligand>
</feature>
<accession>Q9A2L1</accession>
<evidence type="ECO:0000255" key="1">
    <source>
        <dbReference type="HAMAP-Rule" id="MF_00102"/>
    </source>
</evidence>
<evidence type="ECO:0000305" key="2"/>